<name>ATPF_PSEPW</name>
<accession>B1JFU5</accession>
<gene>
    <name evidence="1" type="primary">atpF</name>
    <name type="ordered locus">PputW619_5204</name>
</gene>
<dbReference type="EMBL" id="CP000949">
    <property type="protein sequence ID" value="ACA75679.1"/>
    <property type="molecule type" value="Genomic_DNA"/>
</dbReference>
<dbReference type="SMR" id="B1JFU5"/>
<dbReference type="STRING" id="390235.PputW619_5204"/>
<dbReference type="KEGG" id="ppw:PputW619_5204"/>
<dbReference type="eggNOG" id="COG0711">
    <property type="taxonomic scope" value="Bacteria"/>
</dbReference>
<dbReference type="HOGENOM" id="CLU_079215_4_5_6"/>
<dbReference type="OrthoDB" id="9788020at2"/>
<dbReference type="GO" id="GO:0005886">
    <property type="term" value="C:plasma membrane"/>
    <property type="evidence" value="ECO:0007669"/>
    <property type="project" value="UniProtKB-SubCell"/>
</dbReference>
<dbReference type="GO" id="GO:0045259">
    <property type="term" value="C:proton-transporting ATP synthase complex"/>
    <property type="evidence" value="ECO:0007669"/>
    <property type="project" value="UniProtKB-KW"/>
</dbReference>
<dbReference type="GO" id="GO:0046933">
    <property type="term" value="F:proton-transporting ATP synthase activity, rotational mechanism"/>
    <property type="evidence" value="ECO:0007669"/>
    <property type="project" value="UniProtKB-UniRule"/>
</dbReference>
<dbReference type="GO" id="GO:0046961">
    <property type="term" value="F:proton-transporting ATPase activity, rotational mechanism"/>
    <property type="evidence" value="ECO:0007669"/>
    <property type="project" value="TreeGrafter"/>
</dbReference>
<dbReference type="CDD" id="cd06503">
    <property type="entry name" value="ATP-synt_Fo_b"/>
    <property type="match status" value="1"/>
</dbReference>
<dbReference type="Gene3D" id="6.10.250.1580">
    <property type="match status" value="1"/>
</dbReference>
<dbReference type="HAMAP" id="MF_01398">
    <property type="entry name" value="ATP_synth_b_bprime"/>
    <property type="match status" value="1"/>
</dbReference>
<dbReference type="InterPro" id="IPR028987">
    <property type="entry name" value="ATP_synth_B-like_membr_sf"/>
</dbReference>
<dbReference type="InterPro" id="IPR002146">
    <property type="entry name" value="ATP_synth_b/b'su_bac/chlpt"/>
</dbReference>
<dbReference type="InterPro" id="IPR005864">
    <property type="entry name" value="ATP_synth_F0_bsu_bac"/>
</dbReference>
<dbReference type="InterPro" id="IPR050059">
    <property type="entry name" value="ATP_synthase_B_chain"/>
</dbReference>
<dbReference type="NCBIfam" id="TIGR01144">
    <property type="entry name" value="ATP_synt_b"/>
    <property type="match status" value="1"/>
</dbReference>
<dbReference type="NCBIfam" id="NF004411">
    <property type="entry name" value="PRK05759.1-2"/>
    <property type="match status" value="1"/>
</dbReference>
<dbReference type="NCBIfam" id="NF004413">
    <property type="entry name" value="PRK05759.1-4"/>
    <property type="match status" value="1"/>
</dbReference>
<dbReference type="PANTHER" id="PTHR33445:SF1">
    <property type="entry name" value="ATP SYNTHASE SUBUNIT B"/>
    <property type="match status" value="1"/>
</dbReference>
<dbReference type="PANTHER" id="PTHR33445">
    <property type="entry name" value="ATP SYNTHASE SUBUNIT B', CHLOROPLASTIC"/>
    <property type="match status" value="1"/>
</dbReference>
<dbReference type="Pfam" id="PF00430">
    <property type="entry name" value="ATP-synt_B"/>
    <property type="match status" value="1"/>
</dbReference>
<dbReference type="SUPFAM" id="SSF81573">
    <property type="entry name" value="F1F0 ATP synthase subunit B, membrane domain"/>
    <property type="match status" value="1"/>
</dbReference>
<proteinExistence type="inferred from homology"/>
<reference key="1">
    <citation type="submission" date="2008-02" db="EMBL/GenBank/DDBJ databases">
        <title>Complete sequence of Pseudomonas putida W619.</title>
        <authorList>
            <person name="Copeland A."/>
            <person name="Lucas S."/>
            <person name="Lapidus A."/>
            <person name="Barry K."/>
            <person name="Detter J.C."/>
            <person name="Glavina del Rio T."/>
            <person name="Dalin E."/>
            <person name="Tice H."/>
            <person name="Pitluck S."/>
            <person name="Chain P."/>
            <person name="Malfatti S."/>
            <person name="Shin M."/>
            <person name="Vergez L."/>
            <person name="Schmutz J."/>
            <person name="Larimer F."/>
            <person name="Land M."/>
            <person name="Hauser L."/>
            <person name="Kyrpides N."/>
            <person name="Kim E."/>
            <person name="Taghavi S."/>
            <person name="Vangronsveld D."/>
            <person name="van der Lelie D."/>
            <person name="Richardson P."/>
        </authorList>
    </citation>
    <scope>NUCLEOTIDE SEQUENCE [LARGE SCALE GENOMIC DNA]</scope>
    <source>
        <strain>W619</strain>
    </source>
</reference>
<evidence type="ECO:0000255" key="1">
    <source>
        <dbReference type="HAMAP-Rule" id="MF_01398"/>
    </source>
</evidence>
<feature type="chain" id="PRO_0000368692" description="ATP synthase subunit b">
    <location>
        <begin position="1"/>
        <end position="156"/>
    </location>
</feature>
<feature type="transmembrane region" description="Helical" evidence="1">
    <location>
        <begin position="12"/>
        <end position="32"/>
    </location>
</feature>
<keyword id="KW-0066">ATP synthesis</keyword>
<keyword id="KW-0997">Cell inner membrane</keyword>
<keyword id="KW-1003">Cell membrane</keyword>
<keyword id="KW-0138">CF(0)</keyword>
<keyword id="KW-0375">Hydrogen ion transport</keyword>
<keyword id="KW-0406">Ion transport</keyword>
<keyword id="KW-0472">Membrane</keyword>
<keyword id="KW-0812">Transmembrane</keyword>
<keyword id="KW-1133">Transmembrane helix</keyword>
<keyword id="KW-0813">Transport</keyword>
<sequence length="156" mass="16898">MNINATLIGQSVAFLIFVLFCMKYVWPPVITALQERQKKIADGLDAANRAARDLELAQEKAGQQLREAKAQAAEIIEQSKKRAAQLVEEARDQARVEADRVKAQALAEIEQELNSAKDALRAQVGALAVGGAEKILGATIDQNAHAELVNKLAAEI</sequence>
<comment type="function">
    <text evidence="1">F(1)F(0) ATP synthase produces ATP from ADP in the presence of a proton or sodium gradient. F-type ATPases consist of two structural domains, F(1) containing the extramembraneous catalytic core and F(0) containing the membrane proton channel, linked together by a central stalk and a peripheral stalk. During catalysis, ATP synthesis in the catalytic domain of F(1) is coupled via a rotary mechanism of the central stalk subunits to proton translocation.</text>
</comment>
<comment type="function">
    <text evidence="1">Component of the F(0) channel, it forms part of the peripheral stalk, linking F(1) to F(0).</text>
</comment>
<comment type="subunit">
    <text evidence="1">F-type ATPases have 2 components, F(1) - the catalytic core - and F(0) - the membrane proton channel. F(1) has five subunits: alpha(3), beta(3), gamma(1), delta(1), epsilon(1). F(0) has three main subunits: a(1), b(2) and c(10-14). The alpha and beta chains form an alternating ring which encloses part of the gamma chain. F(1) is attached to F(0) by a central stalk formed by the gamma and epsilon chains, while a peripheral stalk is formed by the delta and b chains.</text>
</comment>
<comment type="subcellular location">
    <subcellularLocation>
        <location evidence="1">Cell inner membrane</location>
        <topology evidence="1">Single-pass membrane protein</topology>
    </subcellularLocation>
</comment>
<comment type="similarity">
    <text evidence="1">Belongs to the ATPase B chain family.</text>
</comment>
<organism>
    <name type="scientific">Pseudomonas putida (strain W619)</name>
    <dbReference type="NCBI Taxonomy" id="390235"/>
    <lineage>
        <taxon>Bacteria</taxon>
        <taxon>Pseudomonadati</taxon>
        <taxon>Pseudomonadota</taxon>
        <taxon>Gammaproteobacteria</taxon>
        <taxon>Pseudomonadales</taxon>
        <taxon>Pseudomonadaceae</taxon>
        <taxon>Pseudomonas</taxon>
    </lineage>
</organism>
<protein>
    <recommendedName>
        <fullName evidence="1">ATP synthase subunit b</fullName>
    </recommendedName>
    <alternativeName>
        <fullName evidence="1">ATP synthase F(0) sector subunit b</fullName>
    </alternativeName>
    <alternativeName>
        <fullName evidence="1">ATPase subunit I</fullName>
    </alternativeName>
    <alternativeName>
        <fullName evidence="1">F-type ATPase subunit b</fullName>
        <shortName evidence="1">F-ATPase subunit b</shortName>
    </alternativeName>
</protein>